<evidence type="ECO:0000255" key="1">
    <source>
        <dbReference type="HAMAP-Rule" id="MF_01334"/>
    </source>
</evidence>
<evidence type="ECO:0000305" key="2"/>
<protein>
    <recommendedName>
        <fullName evidence="1">Large ribosomal subunit protein bL25</fullName>
    </recommendedName>
    <alternativeName>
        <fullName evidence="2">50S ribosomal protein L25</fullName>
    </alternativeName>
    <alternativeName>
        <fullName evidence="1">General stress protein CTC</fullName>
    </alternativeName>
</protein>
<reference key="1">
    <citation type="journal article" date="2006" name="PLoS Genet.">
        <title>Genome sequence of Rickettsia bellii illuminates the role of amoebae in gene exchanges between intracellular pathogens.</title>
        <authorList>
            <person name="Ogata H."/>
            <person name="La Scola B."/>
            <person name="Audic S."/>
            <person name="Renesto P."/>
            <person name="Blanc G."/>
            <person name="Robert C."/>
            <person name="Fournier P.-E."/>
            <person name="Claverie J.-M."/>
            <person name="Raoult D."/>
        </authorList>
    </citation>
    <scope>NUCLEOTIDE SEQUENCE [LARGE SCALE GENOMIC DNA]</scope>
    <source>
        <strain>RML369-C</strain>
    </source>
</reference>
<gene>
    <name evidence="1" type="primary">rplY</name>
    <name evidence="1" type="synonym">ctc</name>
    <name type="ordered locus">RBE_0862</name>
</gene>
<dbReference type="EMBL" id="CP000087">
    <property type="protein sequence ID" value="ABE04943.1"/>
    <property type="molecule type" value="Genomic_DNA"/>
</dbReference>
<dbReference type="RefSeq" id="WP_011477528.1">
    <property type="nucleotide sequence ID" value="NC_007940.1"/>
</dbReference>
<dbReference type="SMR" id="Q1RI71"/>
<dbReference type="KEGG" id="rbe:RBE_0862"/>
<dbReference type="eggNOG" id="COG1825">
    <property type="taxonomic scope" value="Bacteria"/>
</dbReference>
<dbReference type="HOGENOM" id="CLU_075939_0_0_5"/>
<dbReference type="OrthoDB" id="9806411at2"/>
<dbReference type="Proteomes" id="UP000001951">
    <property type="component" value="Chromosome"/>
</dbReference>
<dbReference type="GO" id="GO:0022625">
    <property type="term" value="C:cytosolic large ribosomal subunit"/>
    <property type="evidence" value="ECO:0007669"/>
    <property type="project" value="TreeGrafter"/>
</dbReference>
<dbReference type="GO" id="GO:0008097">
    <property type="term" value="F:5S rRNA binding"/>
    <property type="evidence" value="ECO:0007669"/>
    <property type="project" value="InterPro"/>
</dbReference>
<dbReference type="GO" id="GO:0003735">
    <property type="term" value="F:structural constituent of ribosome"/>
    <property type="evidence" value="ECO:0007669"/>
    <property type="project" value="InterPro"/>
</dbReference>
<dbReference type="GO" id="GO:0006412">
    <property type="term" value="P:translation"/>
    <property type="evidence" value="ECO:0007669"/>
    <property type="project" value="UniProtKB-UniRule"/>
</dbReference>
<dbReference type="CDD" id="cd00495">
    <property type="entry name" value="Ribosomal_L25_TL5_CTC"/>
    <property type="match status" value="1"/>
</dbReference>
<dbReference type="Gene3D" id="2.170.120.20">
    <property type="entry name" value="Ribosomal protein L25, beta domain"/>
    <property type="match status" value="1"/>
</dbReference>
<dbReference type="Gene3D" id="2.40.240.10">
    <property type="entry name" value="Ribosomal Protein L25, Chain P"/>
    <property type="match status" value="1"/>
</dbReference>
<dbReference type="HAMAP" id="MF_01336">
    <property type="entry name" value="Ribosomal_bL25"/>
    <property type="match status" value="1"/>
</dbReference>
<dbReference type="HAMAP" id="MF_01334">
    <property type="entry name" value="Ribosomal_bL25_CTC"/>
    <property type="match status" value="1"/>
</dbReference>
<dbReference type="InterPro" id="IPR020056">
    <property type="entry name" value="Rbsml_bL25/Gln-tRNA_synth_N"/>
</dbReference>
<dbReference type="InterPro" id="IPR011035">
    <property type="entry name" value="Ribosomal_bL25/Gln-tRNA_synth"/>
</dbReference>
<dbReference type="InterPro" id="IPR020057">
    <property type="entry name" value="Ribosomal_bL25_b-dom"/>
</dbReference>
<dbReference type="InterPro" id="IPR037121">
    <property type="entry name" value="Ribosomal_bL25_C"/>
</dbReference>
<dbReference type="InterPro" id="IPR001021">
    <property type="entry name" value="Ribosomal_bL25_long"/>
</dbReference>
<dbReference type="InterPro" id="IPR020055">
    <property type="entry name" value="Ribosomal_bL25_short"/>
</dbReference>
<dbReference type="InterPro" id="IPR029751">
    <property type="entry name" value="Ribosomal_L25_dom"/>
</dbReference>
<dbReference type="InterPro" id="IPR020930">
    <property type="entry name" value="Ribosomal_uL5_bac-type"/>
</dbReference>
<dbReference type="NCBIfam" id="TIGR00731">
    <property type="entry name" value="bL25_bact_ctc"/>
    <property type="match status" value="1"/>
</dbReference>
<dbReference type="NCBIfam" id="NF004128">
    <property type="entry name" value="PRK05618.1-2"/>
    <property type="match status" value="1"/>
</dbReference>
<dbReference type="NCBIfam" id="NF004612">
    <property type="entry name" value="PRK05943.1"/>
    <property type="match status" value="1"/>
</dbReference>
<dbReference type="PANTHER" id="PTHR33284">
    <property type="entry name" value="RIBOSOMAL PROTEIN L25/GLN-TRNA SYNTHETASE, ANTI-CODON-BINDING DOMAIN-CONTAINING PROTEIN"/>
    <property type="match status" value="1"/>
</dbReference>
<dbReference type="PANTHER" id="PTHR33284:SF1">
    <property type="entry name" value="RIBOSOMAL PROTEIN L25_GLN-TRNA SYNTHETASE, ANTI-CODON-BINDING DOMAIN-CONTAINING PROTEIN"/>
    <property type="match status" value="1"/>
</dbReference>
<dbReference type="Pfam" id="PF01386">
    <property type="entry name" value="Ribosomal_L25p"/>
    <property type="match status" value="1"/>
</dbReference>
<dbReference type="Pfam" id="PF14693">
    <property type="entry name" value="Ribosomal_TL5_C"/>
    <property type="match status" value="1"/>
</dbReference>
<dbReference type="SUPFAM" id="SSF50715">
    <property type="entry name" value="Ribosomal protein L25-like"/>
    <property type="match status" value="1"/>
</dbReference>
<sequence>MSEILELEAKSRNEFGTGAARALRREGRVPAIIYGAKKTPVSISLEEKEITKYYRKPAFISQLINLTIEGTQYKVLPKAVELHPVTDIVRHVDFVFLEDKTQKMEVPVVYEGKERALGVKRGGYFNIVKRRVTLLCDVNNIPRNVTIDVTNMPIATSLKSSKVKLPEGCSFTTKKEFVLATIIGRRGAKTEAEGEQTAEAAK</sequence>
<comment type="function">
    <text evidence="1">This is one of the proteins that binds to the 5S RNA in the ribosome where it forms part of the central protuberance.</text>
</comment>
<comment type="subunit">
    <text evidence="1">Part of the 50S ribosomal subunit; part of the 5S rRNA/L5/L18/L25 subcomplex. Contacts the 5S rRNA. Binds to the 5S rRNA independently of L5 and L18.</text>
</comment>
<comment type="similarity">
    <text evidence="1">Belongs to the bacterial ribosomal protein bL25 family. CTC subfamily.</text>
</comment>
<proteinExistence type="inferred from homology"/>
<name>RL25_RICBR</name>
<keyword id="KW-0687">Ribonucleoprotein</keyword>
<keyword id="KW-0689">Ribosomal protein</keyword>
<keyword id="KW-0694">RNA-binding</keyword>
<keyword id="KW-0699">rRNA-binding</keyword>
<organism>
    <name type="scientific">Rickettsia bellii (strain RML369-C)</name>
    <dbReference type="NCBI Taxonomy" id="336407"/>
    <lineage>
        <taxon>Bacteria</taxon>
        <taxon>Pseudomonadati</taxon>
        <taxon>Pseudomonadota</taxon>
        <taxon>Alphaproteobacteria</taxon>
        <taxon>Rickettsiales</taxon>
        <taxon>Rickettsiaceae</taxon>
        <taxon>Rickettsieae</taxon>
        <taxon>Rickettsia</taxon>
        <taxon>belli group</taxon>
    </lineage>
</organism>
<feature type="chain" id="PRO_0000244239" description="Large ribosomal subunit protein bL25">
    <location>
        <begin position="1"/>
        <end position="202"/>
    </location>
</feature>
<accession>Q1RI71</accession>